<proteinExistence type="inferred from homology"/>
<sequence>MSKSENLYSAARELIPGGVNSPVRAFTGVGGTPLFIEKADGAYLYDVDGKAYIDYVGSWGPMVLGHNHPAIRNAVIEAAERGLSFGAPTEMEVKMAQLVTELVPTMDMVRMVNSGTEATMSAIRLARGFTGRDKIIKFEGCYHGHADCLLVKAGSGALTLGQPNSPGVPADFAKHTLTCTYNDLASVRAAFEQYPQEIACIIVEPVAGNMNCVPPLPDFLPGLRALCDEFGALLIIDEVMTGFRVALAGAQDYYGVEPDLTCLGKIIGGGMPVGAFGGRRDVMDALAPTGPVYQAGTLSGNPIAMAAGFACLNEVAQPGVHETLDELTTRLAEGLLEAAEEAGIPLVVNHVGGMFGIFFTDAESVTCYQDVMACDVERFKRFFHMMLDEGVYLAPSAFEAGFMSVAHSMEDINNTIDAARRVFAKL</sequence>
<reference key="1">
    <citation type="journal article" date="2011" name="Proc. Natl. Acad. Sci. U.S.A.">
        <title>Genomic anatomy of Escherichia coli O157:H7 outbreaks.</title>
        <authorList>
            <person name="Eppinger M."/>
            <person name="Mammel M.K."/>
            <person name="Leclerc J.E."/>
            <person name="Ravel J."/>
            <person name="Cebula T.A."/>
        </authorList>
    </citation>
    <scope>NUCLEOTIDE SEQUENCE [LARGE SCALE GENOMIC DNA]</scope>
    <source>
        <strain>EC4115 / EHEC</strain>
    </source>
</reference>
<feature type="chain" id="PRO_1000121880" description="Glutamate-1-semialdehyde 2,1-aminomutase">
    <location>
        <begin position="1"/>
        <end position="426"/>
    </location>
</feature>
<feature type="modified residue" description="N6-(pyridoxal phosphate)lysine" evidence="1">
    <location>
        <position position="265"/>
    </location>
</feature>
<protein>
    <recommendedName>
        <fullName evidence="1">Glutamate-1-semialdehyde 2,1-aminomutase</fullName>
        <shortName evidence="1">GSA</shortName>
        <ecNumber evidence="1">5.4.3.8</ecNumber>
    </recommendedName>
    <alternativeName>
        <fullName evidence="1">Glutamate-1-semialdehyde aminotransferase</fullName>
        <shortName evidence="1">GSA-AT</shortName>
    </alternativeName>
</protein>
<comment type="catalytic activity">
    <reaction evidence="1">
        <text>(S)-4-amino-5-oxopentanoate = 5-aminolevulinate</text>
        <dbReference type="Rhea" id="RHEA:14265"/>
        <dbReference type="ChEBI" id="CHEBI:57501"/>
        <dbReference type="ChEBI" id="CHEBI:356416"/>
        <dbReference type="EC" id="5.4.3.8"/>
    </reaction>
</comment>
<comment type="cofactor">
    <cofactor evidence="1">
        <name>pyridoxal 5'-phosphate</name>
        <dbReference type="ChEBI" id="CHEBI:597326"/>
    </cofactor>
</comment>
<comment type="pathway">
    <text evidence="1">Porphyrin-containing compound metabolism; protoporphyrin-IX biosynthesis; 5-aminolevulinate from L-glutamyl-tRNA(Glu): step 2/2.</text>
</comment>
<comment type="subunit">
    <text evidence="1">Homodimer.</text>
</comment>
<comment type="subcellular location">
    <subcellularLocation>
        <location evidence="1">Cytoplasm</location>
    </subcellularLocation>
</comment>
<comment type="similarity">
    <text evidence="1">Belongs to the class-III pyridoxal-phosphate-dependent aminotransferase family. HemL subfamily.</text>
</comment>
<evidence type="ECO:0000255" key="1">
    <source>
        <dbReference type="HAMAP-Rule" id="MF_00375"/>
    </source>
</evidence>
<gene>
    <name evidence="1" type="primary">hemL</name>
    <name type="ordered locus">ECH74115_0164</name>
</gene>
<accession>B5Z0D4</accession>
<name>GSA_ECO5E</name>
<dbReference type="EC" id="5.4.3.8" evidence="1"/>
<dbReference type="EMBL" id="CP001164">
    <property type="protein sequence ID" value="ACI38389.1"/>
    <property type="molecule type" value="Genomic_DNA"/>
</dbReference>
<dbReference type="RefSeq" id="WP_000045277.1">
    <property type="nucleotide sequence ID" value="NC_011353.1"/>
</dbReference>
<dbReference type="SMR" id="B5Z0D4"/>
<dbReference type="KEGG" id="ecf:ECH74115_0164"/>
<dbReference type="HOGENOM" id="CLU_016922_1_5_6"/>
<dbReference type="UniPathway" id="UPA00251">
    <property type="reaction ID" value="UER00317"/>
</dbReference>
<dbReference type="GO" id="GO:0005737">
    <property type="term" value="C:cytoplasm"/>
    <property type="evidence" value="ECO:0007669"/>
    <property type="project" value="UniProtKB-SubCell"/>
</dbReference>
<dbReference type="GO" id="GO:0042286">
    <property type="term" value="F:glutamate-1-semialdehyde 2,1-aminomutase activity"/>
    <property type="evidence" value="ECO:0007669"/>
    <property type="project" value="UniProtKB-UniRule"/>
</dbReference>
<dbReference type="GO" id="GO:0030170">
    <property type="term" value="F:pyridoxal phosphate binding"/>
    <property type="evidence" value="ECO:0007669"/>
    <property type="project" value="InterPro"/>
</dbReference>
<dbReference type="GO" id="GO:0008483">
    <property type="term" value="F:transaminase activity"/>
    <property type="evidence" value="ECO:0007669"/>
    <property type="project" value="InterPro"/>
</dbReference>
<dbReference type="GO" id="GO:0006782">
    <property type="term" value="P:protoporphyrinogen IX biosynthetic process"/>
    <property type="evidence" value="ECO:0007669"/>
    <property type="project" value="UniProtKB-UniRule"/>
</dbReference>
<dbReference type="CDD" id="cd00610">
    <property type="entry name" value="OAT_like"/>
    <property type="match status" value="1"/>
</dbReference>
<dbReference type="FunFam" id="3.40.640.10:FF:000021">
    <property type="entry name" value="Glutamate-1-semialdehyde 2,1-aminomutase"/>
    <property type="match status" value="1"/>
</dbReference>
<dbReference type="FunFam" id="3.90.1150.10:FF:000012">
    <property type="entry name" value="Glutamate-1-semialdehyde 2,1-aminomutase"/>
    <property type="match status" value="1"/>
</dbReference>
<dbReference type="Gene3D" id="3.90.1150.10">
    <property type="entry name" value="Aspartate Aminotransferase, domain 1"/>
    <property type="match status" value="1"/>
</dbReference>
<dbReference type="Gene3D" id="3.40.640.10">
    <property type="entry name" value="Type I PLP-dependent aspartate aminotransferase-like (Major domain)"/>
    <property type="match status" value="1"/>
</dbReference>
<dbReference type="HAMAP" id="MF_00375">
    <property type="entry name" value="HemL_aminotrans_3"/>
    <property type="match status" value="1"/>
</dbReference>
<dbReference type="InterPro" id="IPR004639">
    <property type="entry name" value="4pyrrol_synth_GluAld_NH2Trfase"/>
</dbReference>
<dbReference type="InterPro" id="IPR005814">
    <property type="entry name" value="Aminotrans_3"/>
</dbReference>
<dbReference type="InterPro" id="IPR049704">
    <property type="entry name" value="Aminotrans_3_PPA_site"/>
</dbReference>
<dbReference type="InterPro" id="IPR015424">
    <property type="entry name" value="PyrdxlP-dep_Trfase"/>
</dbReference>
<dbReference type="InterPro" id="IPR015421">
    <property type="entry name" value="PyrdxlP-dep_Trfase_major"/>
</dbReference>
<dbReference type="InterPro" id="IPR015422">
    <property type="entry name" value="PyrdxlP-dep_Trfase_small"/>
</dbReference>
<dbReference type="NCBIfam" id="TIGR00713">
    <property type="entry name" value="hemL"/>
    <property type="match status" value="1"/>
</dbReference>
<dbReference type="NCBIfam" id="NF000818">
    <property type="entry name" value="PRK00062.1"/>
    <property type="match status" value="1"/>
</dbReference>
<dbReference type="PANTHER" id="PTHR43713">
    <property type="entry name" value="GLUTAMATE-1-SEMIALDEHYDE 2,1-AMINOMUTASE"/>
    <property type="match status" value="1"/>
</dbReference>
<dbReference type="PANTHER" id="PTHR43713:SF3">
    <property type="entry name" value="GLUTAMATE-1-SEMIALDEHYDE 2,1-AMINOMUTASE 1, CHLOROPLASTIC-RELATED"/>
    <property type="match status" value="1"/>
</dbReference>
<dbReference type="Pfam" id="PF00202">
    <property type="entry name" value="Aminotran_3"/>
    <property type="match status" value="1"/>
</dbReference>
<dbReference type="SUPFAM" id="SSF53383">
    <property type="entry name" value="PLP-dependent transferases"/>
    <property type="match status" value="1"/>
</dbReference>
<dbReference type="PROSITE" id="PS00600">
    <property type="entry name" value="AA_TRANSFER_CLASS_3"/>
    <property type="match status" value="1"/>
</dbReference>
<organism>
    <name type="scientific">Escherichia coli O157:H7 (strain EC4115 / EHEC)</name>
    <dbReference type="NCBI Taxonomy" id="444450"/>
    <lineage>
        <taxon>Bacteria</taxon>
        <taxon>Pseudomonadati</taxon>
        <taxon>Pseudomonadota</taxon>
        <taxon>Gammaproteobacteria</taxon>
        <taxon>Enterobacterales</taxon>
        <taxon>Enterobacteriaceae</taxon>
        <taxon>Escherichia</taxon>
    </lineage>
</organism>
<keyword id="KW-0963">Cytoplasm</keyword>
<keyword id="KW-0413">Isomerase</keyword>
<keyword id="KW-0627">Porphyrin biosynthesis</keyword>
<keyword id="KW-0663">Pyridoxal phosphate</keyword>